<comment type="function">
    <text evidence="1">Catalyzes the conversion of S-adenosyl-L-methionine (SAM) to carboxy-S-adenosyl-L-methionine (Cx-SAM).</text>
</comment>
<comment type="catalytic activity">
    <reaction evidence="1">
        <text>prephenate + S-adenosyl-L-methionine = carboxy-S-adenosyl-L-methionine + 3-phenylpyruvate + H2O</text>
        <dbReference type="Rhea" id="RHEA:51692"/>
        <dbReference type="ChEBI" id="CHEBI:15377"/>
        <dbReference type="ChEBI" id="CHEBI:18005"/>
        <dbReference type="ChEBI" id="CHEBI:29934"/>
        <dbReference type="ChEBI" id="CHEBI:59789"/>
        <dbReference type="ChEBI" id="CHEBI:134278"/>
    </reaction>
</comment>
<comment type="subunit">
    <text evidence="1">Homodimer.</text>
</comment>
<comment type="similarity">
    <text evidence="1">Belongs to the class I-like SAM-binding methyltransferase superfamily. Cx-SAM synthase family.</text>
</comment>
<sequence length="247" mass="27791">MSHRDTLFSAPIARLGDWTFDERVAEVFPDMIQRSVPGYSNIISMIGMLAERFVQPGTQVYDLGCSLGAATLSVRRNIHHDNCKIIAIDNSPAMIERCRRHIDAYKAPTPVDVIEGDIRDIAIENASMVVLNFTLQFLEPSERQALLDKIYQGLNPGGALVLSEKFSFEDAKVGELLFNMHHDFKRANGYSELEISQKRSMLENVMLTDSVETHKARLHKAGFEHSELWFQCFNFGSLVALKAEDAA</sequence>
<feature type="chain" id="PRO_0000314390" description="Carboxy-S-adenosyl-L-methionine synthase">
    <location>
        <begin position="1"/>
        <end position="247"/>
    </location>
</feature>
<feature type="binding site" evidence="1">
    <location>
        <position position="39"/>
    </location>
    <ligand>
        <name>S-adenosyl-L-methionine</name>
        <dbReference type="ChEBI" id="CHEBI:59789"/>
    </ligand>
</feature>
<feature type="binding site" evidence="1">
    <location>
        <begin position="64"/>
        <end position="66"/>
    </location>
    <ligand>
        <name>S-adenosyl-L-methionine</name>
        <dbReference type="ChEBI" id="CHEBI:59789"/>
    </ligand>
</feature>
<feature type="binding site" evidence="1">
    <location>
        <begin position="89"/>
        <end position="90"/>
    </location>
    <ligand>
        <name>S-adenosyl-L-methionine</name>
        <dbReference type="ChEBI" id="CHEBI:59789"/>
    </ligand>
</feature>
<feature type="binding site" evidence="1">
    <location>
        <begin position="117"/>
        <end position="118"/>
    </location>
    <ligand>
        <name>S-adenosyl-L-methionine</name>
        <dbReference type="ChEBI" id="CHEBI:59789"/>
    </ligand>
</feature>
<feature type="binding site" evidence="1">
    <location>
        <position position="132"/>
    </location>
    <ligand>
        <name>S-adenosyl-L-methionine</name>
        <dbReference type="ChEBI" id="CHEBI:59789"/>
    </ligand>
</feature>
<feature type="binding site" evidence="1">
    <location>
        <position position="199"/>
    </location>
    <ligand>
        <name>S-adenosyl-L-methionine</name>
        <dbReference type="ChEBI" id="CHEBI:59789"/>
    </ligand>
</feature>
<dbReference type="EC" id="2.1.3.-" evidence="1"/>
<dbReference type="EMBL" id="CP000266">
    <property type="protein sequence ID" value="ABF04057.1"/>
    <property type="molecule type" value="Genomic_DNA"/>
</dbReference>
<dbReference type="RefSeq" id="WP_000019588.1">
    <property type="nucleotide sequence ID" value="NC_008258.1"/>
</dbReference>
<dbReference type="SMR" id="Q0T3Q8"/>
<dbReference type="GeneID" id="75202724"/>
<dbReference type="KEGG" id="sfv:SFV_1906"/>
<dbReference type="HOGENOM" id="CLU_078475_0_0_6"/>
<dbReference type="Proteomes" id="UP000000659">
    <property type="component" value="Chromosome"/>
</dbReference>
<dbReference type="GO" id="GO:0016743">
    <property type="term" value="F:carboxyl- or carbamoyltransferase activity"/>
    <property type="evidence" value="ECO:0007669"/>
    <property type="project" value="UniProtKB-UniRule"/>
</dbReference>
<dbReference type="GO" id="GO:1904047">
    <property type="term" value="F:S-adenosyl-L-methionine binding"/>
    <property type="evidence" value="ECO:0007669"/>
    <property type="project" value="UniProtKB-UniRule"/>
</dbReference>
<dbReference type="GO" id="GO:0002098">
    <property type="term" value="P:tRNA wobble uridine modification"/>
    <property type="evidence" value="ECO:0007669"/>
    <property type="project" value="InterPro"/>
</dbReference>
<dbReference type="CDD" id="cd02440">
    <property type="entry name" value="AdoMet_MTases"/>
    <property type="match status" value="1"/>
</dbReference>
<dbReference type="FunFam" id="3.40.50.150:FF:000030">
    <property type="entry name" value="Carboxy-S-adenosyl-L-methionine synthase"/>
    <property type="match status" value="1"/>
</dbReference>
<dbReference type="Gene3D" id="3.40.50.150">
    <property type="entry name" value="Vaccinia Virus protein VP39"/>
    <property type="match status" value="1"/>
</dbReference>
<dbReference type="HAMAP" id="MF_01589">
    <property type="entry name" value="Cx_SAM_synthase"/>
    <property type="match status" value="1"/>
</dbReference>
<dbReference type="InterPro" id="IPR005271">
    <property type="entry name" value="CmoA"/>
</dbReference>
<dbReference type="InterPro" id="IPR041698">
    <property type="entry name" value="Methyltransf_25"/>
</dbReference>
<dbReference type="InterPro" id="IPR029063">
    <property type="entry name" value="SAM-dependent_MTases_sf"/>
</dbReference>
<dbReference type="NCBIfam" id="TIGR00740">
    <property type="entry name" value="carboxy-S-adenosyl-L-methionine synthase CmoA"/>
    <property type="match status" value="1"/>
</dbReference>
<dbReference type="NCBIfam" id="NF011995">
    <property type="entry name" value="PRK15451.1"/>
    <property type="match status" value="1"/>
</dbReference>
<dbReference type="PANTHER" id="PTHR43861:SF2">
    <property type="entry name" value="CARBOXY-S-ADENOSYL-L-METHIONINE SYNTHASE"/>
    <property type="match status" value="1"/>
</dbReference>
<dbReference type="PANTHER" id="PTHR43861">
    <property type="entry name" value="TRANS-ACONITATE 2-METHYLTRANSFERASE-RELATED"/>
    <property type="match status" value="1"/>
</dbReference>
<dbReference type="Pfam" id="PF13649">
    <property type="entry name" value="Methyltransf_25"/>
    <property type="match status" value="1"/>
</dbReference>
<dbReference type="PIRSF" id="PIRSF006325">
    <property type="entry name" value="MeTrfase_bac"/>
    <property type="match status" value="1"/>
</dbReference>
<dbReference type="SUPFAM" id="SSF53335">
    <property type="entry name" value="S-adenosyl-L-methionine-dependent methyltransferases"/>
    <property type="match status" value="1"/>
</dbReference>
<name>CMOA_SHIF8</name>
<organism>
    <name type="scientific">Shigella flexneri serotype 5b (strain 8401)</name>
    <dbReference type="NCBI Taxonomy" id="373384"/>
    <lineage>
        <taxon>Bacteria</taxon>
        <taxon>Pseudomonadati</taxon>
        <taxon>Pseudomonadota</taxon>
        <taxon>Gammaproteobacteria</taxon>
        <taxon>Enterobacterales</taxon>
        <taxon>Enterobacteriaceae</taxon>
        <taxon>Shigella</taxon>
    </lineage>
</organism>
<protein>
    <recommendedName>
        <fullName evidence="1">Carboxy-S-adenosyl-L-methionine synthase</fullName>
        <shortName evidence="1">Cx-SAM synthase</shortName>
        <ecNumber evidence="1">2.1.3.-</ecNumber>
    </recommendedName>
</protein>
<proteinExistence type="inferred from homology"/>
<gene>
    <name evidence="1" type="primary">cmoA</name>
    <name type="ordered locus">SFV_1906</name>
</gene>
<keyword id="KW-0949">S-adenosyl-L-methionine</keyword>
<keyword id="KW-0808">Transferase</keyword>
<reference key="1">
    <citation type="journal article" date="2006" name="BMC Genomics">
        <title>Complete genome sequence of Shigella flexneri 5b and comparison with Shigella flexneri 2a.</title>
        <authorList>
            <person name="Nie H."/>
            <person name="Yang F."/>
            <person name="Zhang X."/>
            <person name="Yang J."/>
            <person name="Chen L."/>
            <person name="Wang J."/>
            <person name="Xiong Z."/>
            <person name="Peng J."/>
            <person name="Sun L."/>
            <person name="Dong J."/>
            <person name="Xue Y."/>
            <person name="Xu X."/>
            <person name="Chen S."/>
            <person name="Yao Z."/>
            <person name="Shen Y."/>
            <person name="Jin Q."/>
        </authorList>
    </citation>
    <scope>NUCLEOTIDE SEQUENCE [LARGE SCALE GENOMIC DNA]</scope>
    <source>
        <strain>8401</strain>
    </source>
</reference>
<accession>Q0T3Q8</accession>
<evidence type="ECO:0000255" key="1">
    <source>
        <dbReference type="HAMAP-Rule" id="MF_01589"/>
    </source>
</evidence>